<reference key="1">
    <citation type="journal article" date="2003" name="DNA Res.">
        <title>Complete genome structure of Gloeobacter violaceus PCC 7421, a cyanobacterium that lacks thylakoids.</title>
        <authorList>
            <person name="Nakamura Y."/>
            <person name="Kaneko T."/>
            <person name="Sato S."/>
            <person name="Mimuro M."/>
            <person name="Miyashita H."/>
            <person name="Tsuchiya T."/>
            <person name="Sasamoto S."/>
            <person name="Watanabe A."/>
            <person name="Kawashima K."/>
            <person name="Kishida Y."/>
            <person name="Kiyokawa C."/>
            <person name="Kohara M."/>
            <person name="Matsumoto M."/>
            <person name="Matsuno A."/>
            <person name="Nakazaki N."/>
            <person name="Shimpo S."/>
            <person name="Takeuchi C."/>
            <person name="Yamada M."/>
            <person name="Tabata S."/>
        </authorList>
    </citation>
    <scope>NUCLEOTIDE SEQUENCE [LARGE SCALE GENOMIC DNA]</scope>
    <source>
        <strain>ATCC 29082 / PCC 7421</strain>
    </source>
</reference>
<feature type="chain" id="PRO_0000145946" description="Phosphoglycerate kinase">
    <location>
        <begin position="1"/>
        <end position="407"/>
    </location>
</feature>
<feature type="binding site" evidence="1">
    <location>
        <begin position="24"/>
        <end position="26"/>
    </location>
    <ligand>
        <name>substrate</name>
    </ligand>
</feature>
<feature type="binding site" evidence="1">
    <location>
        <position position="40"/>
    </location>
    <ligand>
        <name>substrate</name>
    </ligand>
</feature>
<feature type="binding site" evidence="1">
    <location>
        <begin position="63"/>
        <end position="66"/>
    </location>
    <ligand>
        <name>substrate</name>
    </ligand>
</feature>
<feature type="binding site" evidence="1">
    <location>
        <position position="121"/>
    </location>
    <ligand>
        <name>substrate</name>
    </ligand>
</feature>
<feature type="binding site" evidence="1">
    <location>
        <position position="154"/>
    </location>
    <ligand>
        <name>substrate</name>
    </ligand>
</feature>
<feature type="binding site" evidence="1">
    <location>
        <position position="205"/>
    </location>
    <ligand>
        <name>ATP</name>
        <dbReference type="ChEBI" id="CHEBI:30616"/>
    </ligand>
</feature>
<feature type="binding site" evidence="1">
    <location>
        <position position="337"/>
    </location>
    <ligand>
        <name>ATP</name>
        <dbReference type="ChEBI" id="CHEBI:30616"/>
    </ligand>
</feature>
<feature type="binding site" evidence="1">
    <location>
        <begin position="363"/>
        <end position="366"/>
    </location>
    <ligand>
        <name>ATP</name>
        <dbReference type="ChEBI" id="CHEBI:30616"/>
    </ligand>
</feature>
<name>PGK_GLOVI</name>
<proteinExistence type="inferred from homology"/>
<sequence length="407" mass="43063">MAKKTVEALGAADLKGKRALVRVDFNVPLDESGQITDDTRIRAALPTIGMLTGGGARVILVSHLGRPKGFDDQLRLTPVAKRLGELLGQTVYKADDVIGPEVEEAVKKLEDGDVLLLENVRFYPEEEKNNPEFAQKLAGLAELYVNDAFGTAHRAHASTEGVARYLRPAVAGLLLQKELEYLGKALESPERPVLAIMGGAKVSDKIQLIQNMLTKVDSILIGGAMAYTFLKAQGVDVGASRCETSTTKKDGTTVDLLQLALDLLAEAKERGVTFLLPVDHRTNDKFGDLADPPVTPDANIPEGQMALDIGPKTEELYVAEVQKSGTVIWNGPMGVFELPGFSKGTFAVAHALAESDNLSIVGGGDSASAAEKAGVVDKLSHVSTGGGASLEFLEGKTLPGVAALDEA</sequence>
<evidence type="ECO:0000255" key="1">
    <source>
        <dbReference type="HAMAP-Rule" id="MF_00145"/>
    </source>
</evidence>
<gene>
    <name evidence="1" type="primary">pgk</name>
    <name type="ordered locus">glr2313</name>
</gene>
<comment type="catalytic activity">
    <reaction evidence="1">
        <text>(2R)-3-phosphoglycerate + ATP = (2R)-3-phospho-glyceroyl phosphate + ADP</text>
        <dbReference type="Rhea" id="RHEA:14801"/>
        <dbReference type="ChEBI" id="CHEBI:30616"/>
        <dbReference type="ChEBI" id="CHEBI:57604"/>
        <dbReference type="ChEBI" id="CHEBI:58272"/>
        <dbReference type="ChEBI" id="CHEBI:456216"/>
        <dbReference type="EC" id="2.7.2.3"/>
    </reaction>
</comment>
<comment type="pathway">
    <text evidence="1">Carbohydrate degradation; glycolysis; pyruvate from D-glyceraldehyde 3-phosphate: step 2/5.</text>
</comment>
<comment type="subunit">
    <text evidence="1">Monomer.</text>
</comment>
<comment type="subcellular location">
    <subcellularLocation>
        <location evidence="1">Cytoplasm</location>
    </subcellularLocation>
</comment>
<comment type="similarity">
    <text evidence="1">Belongs to the phosphoglycerate kinase family.</text>
</comment>
<protein>
    <recommendedName>
        <fullName evidence="1">Phosphoglycerate kinase</fullName>
        <ecNumber evidence="1">2.7.2.3</ecNumber>
    </recommendedName>
</protein>
<dbReference type="EC" id="2.7.2.3" evidence="1"/>
<dbReference type="EMBL" id="BA000045">
    <property type="protein sequence ID" value="BAC90254.1"/>
    <property type="molecule type" value="Genomic_DNA"/>
</dbReference>
<dbReference type="RefSeq" id="NP_925259.1">
    <property type="nucleotide sequence ID" value="NC_005125.1"/>
</dbReference>
<dbReference type="RefSeq" id="WP_011142310.1">
    <property type="nucleotide sequence ID" value="NC_005125.1"/>
</dbReference>
<dbReference type="SMR" id="Q7NI70"/>
<dbReference type="FunCoup" id="Q7NI70">
    <property type="interactions" value="337"/>
</dbReference>
<dbReference type="STRING" id="251221.gene:10759808"/>
<dbReference type="EnsemblBacteria" id="BAC90254">
    <property type="protein sequence ID" value="BAC90254"/>
    <property type="gene ID" value="BAC90254"/>
</dbReference>
<dbReference type="KEGG" id="gvi:glr2313"/>
<dbReference type="PATRIC" id="fig|251221.4.peg.2349"/>
<dbReference type="eggNOG" id="COG0126">
    <property type="taxonomic scope" value="Bacteria"/>
</dbReference>
<dbReference type="HOGENOM" id="CLU_025427_0_2_3"/>
<dbReference type="InParanoid" id="Q7NI70"/>
<dbReference type="OrthoDB" id="9808460at2"/>
<dbReference type="PhylomeDB" id="Q7NI70"/>
<dbReference type="UniPathway" id="UPA00109">
    <property type="reaction ID" value="UER00185"/>
</dbReference>
<dbReference type="Proteomes" id="UP000000557">
    <property type="component" value="Chromosome"/>
</dbReference>
<dbReference type="GO" id="GO:0005829">
    <property type="term" value="C:cytosol"/>
    <property type="evidence" value="ECO:0000318"/>
    <property type="project" value="GO_Central"/>
</dbReference>
<dbReference type="GO" id="GO:0043531">
    <property type="term" value="F:ADP binding"/>
    <property type="evidence" value="ECO:0000318"/>
    <property type="project" value="GO_Central"/>
</dbReference>
<dbReference type="GO" id="GO:0005524">
    <property type="term" value="F:ATP binding"/>
    <property type="evidence" value="ECO:0000318"/>
    <property type="project" value="GO_Central"/>
</dbReference>
<dbReference type="GO" id="GO:0004618">
    <property type="term" value="F:phosphoglycerate kinase activity"/>
    <property type="evidence" value="ECO:0000318"/>
    <property type="project" value="GO_Central"/>
</dbReference>
<dbReference type="GO" id="GO:0006094">
    <property type="term" value="P:gluconeogenesis"/>
    <property type="evidence" value="ECO:0000318"/>
    <property type="project" value="GO_Central"/>
</dbReference>
<dbReference type="GO" id="GO:0006096">
    <property type="term" value="P:glycolytic process"/>
    <property type="evidence" value="ECO:0000318"/>
    <property type="project" value="GO_Central"/>
</dbReference>
<dbReference type="CDD" id="cd00318">
    <property type="entry name" value="Phosphoglycerate_kinase"/>
    <property type="match status" value="1"/>
</dbReference>
<dbReference type="FunFam" id="3.40.50.1260:FF:000003">
    <property type="entry name" value="Phosphoglycerate kinase"/>
    <property type="match status" value="1"/>
</dbReference>
<dbReference type="FunFam" id="3.40.50.1260:FF:000006">
    <property type="entry name" value="Phosphoglycerate kinase"/>
    <property type="match status" value="1"/>
</dbReference>
<dbReference type="Gene3D" id="3.40.50.1260">
    <property type="entry name" value="Phosphoglycerate kinase, N-terminal domain"/>
    <property type="match status" value="2"/>
</dbReference>
<dbReference type="HAMAP" id="MF_00145">
    <property type="entry name" value="Phosphoglyc_kinase"/>
    <property type="match status" value="1"/>
</dbReference>
<dbReference type="InterPro" id="IPR001576">
    <property type="entry name" value="Phosphoglycerate_kinase"/>
</dbReference>
<dbReference type="InterPro" id="IPR015824">
    <property type="entry name" value="Phosphoglycerate_kinase_N"/>
</dbReference>
<dbReference type="InterPro" id="IPR036043">
    <property type="entry name" value="Phosphoglycerate_kinase_sf"/>
</dbReference>
<dbReference type="PANTHER" id="PTHR11406">
    <property type="entry name" value="PHOSPHOGLYCERATE KINASE"/>
    <property type="match status" value="1"/>
</dbReference>
<dbReference type="PANTHER" id="PTHR11406:SF23">
    <property type="entry name" value="PHOSPHOGLYCERATE KINASE 1, CHLOROPLASTIC-RELATED"/>
    <property type="match status" value="1"/>
</dbReference>
<dbReference type="Pfam" id="PF00162">
    <property type="entry name" value="PGK"/>
    <property type="match status" value="1"/>
</dbReference>
<dbReference type="PIRSF" id="PIRSF000724">
    <property type="entry name" value="Pgk"/>
    <property type="match status" value="1"/>
</dbReference>
<dbReference type="PRINTS" id="PR00477">
    <property type="entry name" value="PHGLYCKINASE"/>
</dbReference>
<dbReference type="SUPFAM" id="SSF53748">
    <property type="entry name" value="Phosphoglycerate kinase"/>
    <property type="match status" value="1"/>
</dbReference>
<keyword id="KW-0067">ATP-binding</keyword>
<keyword id="KW-0963">Cytoplasm</keyword>
<keyword id="KW-0324">Glycolysis</keyword>
<keyword id="KW-0418">Kinase</keyword>
<keyword id="KW-0547">Nucleotide-binding</keyword>
<keyword id="KW-1185">Reference proteome</keyword>
<keyword id="KW-0808">Transferase</keyword>
<organism>
    <name type="scientific">Gloeobacter violaceus (strain ATCC 29082 / PCC 7421)</name>
    <dbReference type="NCBI Taxonomy" id="251221"/>
    <lineage>
        <taxon>Bacteria</taxon>
        <taxon>Bacillati</taxon>
        <taxon>Cyanobacteriota</taxon>
        <taxon>Cyanophyceae</taxon>
        <taxon>Gloeobacterales</taxon>
        <taxon>Gloeobacteraceae</taxon>
        <taxon>Gloeobacter</taxon>
    </lineage>
</organism>
<accession>Q7NI70</accession>